<name>SRY_MACMU</name>
<gene>
    <name type="primary">SRY</name>
    <name type="synonym">TDF</name>
</gene>
<dbReference type="EMBL" id="AF322901">
    <property type="protein sequence ID" value="AAK01652.1"/>
    <property type="molecule type" value="mRNA"/>
</dbReference>
<dbReference type="RefSeq" id="NP_001028008.1">
    <property type="nucleotide sequence ID" value="NM_001032836.1"/>
</dbReference>
<dbReference type="SMR" id="Q9BG90"/>
<dbReference type="FunCoup" id="Q9BG90">
    <property type="interactions" value="12"/>
</dbReference>
<dbReference type="STRING" id="9544.ENSMMUP00000045603"/>
<dbReference type="GeneID" id="574155"/>
<dbReference type="KEGG" id="mcc:574155"/>
<dbReference type="CTD" id="6736"/>
<dbReference type="InParanoid" id="Q9BG90"/>
<dbReference type="OrthoDB" id="6247875at2759"/>
<dbReference type="Proteomes" id="UP000006718">
    <property type="component" value="Unassembled WGS sequence"/>
</dbReference>
<dbReference type="GO" id="GO:0005737">
    <property type="term" value="C:cytoplasm"/>
    <property type="evidence" value="ECO:0007669"/>
    <property type="project" value="UniProtKB-SubCell"/>
</dbReference>
<dbReference type="GO" id="GO:0016607">
    <property type="term" value="C:nuclear speck"/>
    <property type="evidence" value="ECO:0007669"/>
    <property type="project" value="UniProtKB-SubCell"/>
</dbReference>
<dbReference type="GO" id="GO:0005634">
    <property type="term" value="C:nucleus"/>
    <property type="evidence" value="ECO:0000250"/>
    <property type="project" value="UniProtKB"/>
</dbReference>
<dbReference type="GO" id="GO:0005516">
    <property type="term" value="F:calmodulin binding"/>
    <property type="evidence" value="ECO:0007669"/>
    <property type="project" value="UniProtKB-KW"/>
</dbReference>
<dbReference type="GO" id="GO:0001228">
    <property type="term" value="F:DNA-binding transcription activator activity, RNA polymerase II-specific"/>
    <property type="evidence" value="ECO:0000318"/>
    <property type="project" value="GO_Central"/>
</dbReference>
<dbReference type="GO" id="GO:0000978">
    <property type="term" value="F:RNA polymerase II cis-regulatory region sequence-specific DNA binding"/>
    <property type="evidence" value="ECO:0000318"/>
    <property type="project" value="GO_Central"/>
</dbReference>
<dbReference type="GO" id="GO:0030154">
    <property type="term" value="P:cell differentiation"/>
    <property type="evidence" value="ECO:0000318"/>
    <property type="project" value="GO_Central"/>
</dbReference>
<dbReference type="GO" id="GO:0030238">
    <property type="term" value="P:male sex determination"/>
    <property type="evidence" value="ECO:0000318"/>
    <property type="project" value="GO_Central"/>
</dbReference>
<dbReference type="GO" id="GO:0010628">
    <property type="term" value="P:positive regulation of gene expression"/>
    <property type="evidence" value="ECO:0000250"/>
    <property type="project" value="UniProtKB"/>
</dbReference>
<dbReference type="GO" id="GO:0045944">
    <property type="term" value="P:positive regulation of transcription by RNA polymerase II"/>
    <property type="evidence" value="ECO:0000318"/>
    <property type="project" value="GO_Central"/>
</dbReference>
<dbReference type="GO" id="GO:0007548">
    <property type="term" value="P:sex differentiation"/>
    <property type="evidence" value="ECO:0007669"/>
    <property type="project" value="UniProtKB-KW"/>
</dbReference>
<dbReference type="CDD" id="cd22034">
    <property type="entry name" value="HMG-box_SoxA_SRY"/>
    <property type="match status" value="1"/>
</dbReference>
<dbReference type="FunFam" id="1.10.30.10:FF:000002">
    <property type="entry name" value="transcription factor Sox-2"/>
    <property type="match status" value="1"/>
</dbReference>
<dbReference type="Gene3D" id="1.10.30.10">
    <property type="entry name" value="High mobility group box domain"/>
    <property type="match status" value="1"/>
</dbReference>
<dbReference type="InterPro" id="IPR009071">
    <property type="entry name" value="HMG_box_dom"/>
</dbReference>
<dbReference type="InterPro" id="IPR036910">
    <property type="entry name" value="HMG_box_dom_sf"/>
</dbReference>
<dbReference type="InterPro" id="IPR017253">
    <property type="entry name" value="SRY"/>
</dbReference>
<dbReference type="InterPro" id="IPR050140">
    <property type="entry name" value="SRY-related_HMG-box_TF-like"/>
</dbReference>
<dbReference type="PANTHER" id="PTHR10270:SF161">
    <property type="entry name" value="SEX-DETERMINING REGION Y PROTEIN"/>
    <property type="match status" value="1"/>
</dbReference>
<dbReference type="PANTHER" id="PTHR10270">
    <property type="entry name" value="SOX TRANSCRIPTION FACTOR"/>
    <property type="match status" value="1"/>
</dbReference>
<dbReference type="Pfam" id="PF00505">
    <property type="entry name" value="HMG_box"/>
    <property type="match status" value="1"/>
</dbReference>
<dbReference type="PIRSF" id="PIRSF037653">
    <property type="entry name" value="SRY"/>
    <property type="match status" value="1"/>
</dbReference>
<dbReference type="SMART" id="SM00398">
    <property type="entry name" value="HMG"/>
    <property type="match status" value="1"/>
</dbReference>
<dbReference type="SUPFAM" id="SSF47095">
    <property type="entry name" value="HMG-box"/>
    <property type="match status" value="1"/>
</dbReference>
<dbReference type="PROSITE" id="PS50118">
    <property type="entry name" value="HMG_BOX_2"/>
    <property type="match status" value="1"/>
</dbReference>
<proteinExistence type="evidence at transcript level"/>
<sequence length="204" mass="23618">MQSYASAMLSVFNTDGYSPAAQQNIPALRRSSSFICTESCSSKYQCEAGENSKGSVQDKVKRPMNAFIVWSRDQKRKMALENPKMRNSEISKQLGYQWKMLTEADKWPFFQEAQKLQAMHREKYPNYKYRPRRKAKMLQNSCSLLPADPSSVPCREVQLDNRLYRDDCTKATHSRMQHQLGHLPPINTASSPQQRDRYSHSTKL</sequence>
<keyword id="KW-0007">Acetylation</keyword>
<keyword id="KW-0010">Activator</keyword>
<keyword id="KW-0112">Calmodulin-binding</keyword>
<keyword id="KW-0963">Cytoplasm</keyword>
<keyword id="KW-0221">Differentiation</keyword>
<keyword id="KW-0238">DNA-binding</keyword>
<keyword id="KW-0539">Nucleus</keyword>
<keyword id="KW-1185">Reference proteome</keyword>
<keyword id="KW-0678">Repressor</keyword>
<keyword id="KW-0726">Sexual differentiation</keyword>
<keyword id="KW-0804">Transcription</keyword>
<keyword id="KW-0805">Transcription regulation</keyword>
<organism>
    <name type="scientific">Macaca mulatta</name>
    <name type="common">Rhesus macaque</name>
    <dbReference type="NCBI Taxonomy" id="9544"/>
    <lineage>
        <taxon>Eukaryota</taxon>
        <taxon>Metazoa</taxon>
        <taxon>Chordata</taxon>
        <taxon>Craniata</taxon>
        <taxon>Vertebrata</taxon>
        <taxon>Euteleostomi</taxon>
        <taxon>Mammalia</taxon>
        <taxon>Eutheria</taxon>
        <taxon>Euarchontoglires</taxon>
        <taxon>Primates</taxon>
        <taxon>Haplorrhini</taxon>
        <taxon>Catarrhini</taxon>
        <taxon>Cercopithecidae</taxon>
        <taxon>Cercopithecinae</taxon>
        <taxon>Macaca</taxon>
    </lineage>
</organism>
<reference key="1">
    <citation type="journal article" date="2001" name="Am. J. Hum. Genet.">
        <title>Primate DAX1, SRY, and SOX9: evolutionary stratification of sex-determination pathway.</title>
        <authorList>
            <person name="Patel M."/>
            <person name="Dorman K.S."/>
            <person name="Zhang Y.-H."/>
            <person name="Huang B.-L."/>
            <person name="Arnold A.P."/>
            <person name="Sinsheimer J.S."/>
            <person name="Vilain E."/>
            <person name="McCabe E.R.B."/>
        </authorList>
    </citation>
    <scope>NUCLEOTIDE SEQUENCE [MRNA]</scope>
</reference>
<protein>
    <recommendedName>
        <fullName>Sex-determining region Y protein</fullName>
    </recommendedName>
    <alternativeName>
        <fullName>Testis-determining factor</fullName>
    </alternativeName>
</protein>
<accession>Q9BG90</accession>
<evidence type="ECO:0000250" key="1">
    <source>
        <dbReference type="UniProtKB" id="P36394"/>
    </source>
</evidence>
<evidence type="ECO:0000250" key="2">
    <source>
        <dbReference type="UniProtKB" id="Q05066"/>
    </source>
</evidence>
<evidence type="ECO:0000255" key="3">
    <source>
        <dbReference type="PROSITE-ProRule" id="PRU00267"/>
    </source>
</evidence>
<evidence type="ECO:0000256" key="4">
    <source>
        <dbReference type="SAM" id="MobiDB-lite"/>
    </source>
</evidence>
<evidence type="ECO:0000305" key="5"/>
<comment type="function">
    <text evidence="1 2">Transcriptional regulator that controls a genetic switch in male development. It is necessary and sufficient for initiating male sex determination by directing the development of supporting cell precursors (pre-Sertoli cells) as Sertoli rather than granulosa cells. Involved in different aspects of gene regulation including promoter activation or repression. Binds to the DNA consensus sequence 5'-[AT]AACAA[AT]-3'. SRY HMG box recognizes DNA by partial intercalation in the minor groove and promotes DNA bending. Also involved in pre-mRNA splicing (By similarity). In male adult brain involved in the maintenance of motor functions of dopaminergic neurons (By similarity).</text>
</comment>
<comment type="subunit">
    <text evidence="2">Interacts with CALM, EP300, HDAC3, KPNB1, ZNF208 isoform KRAB-O, PARP1, SLC9A3R2 and WT1. The interaction with EP300 modulates its DNA-binding activity. The interaction with KPNB1 is sensitive to dissociation by Ran in the GTP-bound form. Interaction with PARP1 impaired its DNA-binding activity.</text>
</comment>
<comment type="subcellular location">
    <subcellularLocation>
        <location evidence="2">Nucleus speckle</location>
    </subcellularLocation>
    <subcellularLocation>
        <location evidence="2">Cytoplasm</location>
    </subcellularLocation>
    <subcellularLocation>
        <location evidence="2">Nucleus</location>
    </subcellularLocation>
</comment>
<comment type="PTM">
    <text evidence="2">Acetylation of Lys-136 contributes to its nuclear localization and enhances its interaction with KPNB1. Deacetylated by HDAC3.</text>
</comment>
<comment type="similarity">
    <text evidence="5">Belongs to the SRY family.</text>
</comment>
<comment type="online information" name="Protein Spotlight">
    <link uri="https://www.proteinspotlight.org/back_issues/080"/>
    <text>The tenuous nature of sex - Issue 80 of March 2007</text>
</comment>
<feature type="chain" id="PRO_0000048678" description="Sex-determining region Y protein">
    <location>
        <begin position="1"/>
        <end position="204"/>
    </location>
</feature>
<feature type="DNA-binding region" description="HMG box" evidence="3">
    <location>
        <begin position="60"/>
        <end position="128"/>
    </location>
</feature>
<feature type="region of interest" description="Disordered" evidence="4">
    <location>
        <begin position="175"/>
        <end position="204"/>
    </location>
</feature>
<feature type="compositionally biased region" description="Basic and acidic residues" evidence="4">
    <location>
        <begin position="194"/>
        <end position="204"/>
    </location>
</feature>